<keyword id="KW-0963">Cytoplasm</keyword>
<keyword id="KW-0460">Magnesium</keyword>
<keyword id="KW-0479">Metal-binding</keyword>
<keyword id="KW-0548">Nucleotidyltransferase</keyword>
<keyword id="KW-1185">Reference proteome</keyword>
<keyword id="KW-0694">RNA-binding</keyword>
<keyword id="KW-0808">Transferase</keyword>
<comment type="function">
    <text evidence="1">Involved in mRNA degradation. Catalyzes the phosphorolysis of single-stranded polyribonucleotides processively in the 3'- to 5'-direction.</text>
</comment>
<comment type="catalytic activity">
    <reaction evidence="1">
        <text>RNA(n+1) + phosphate = RNA(n) + a ribonucleoside 5'-diphosphate</text>
        <dbReference type="Rhea" id="RHEA:22096"/>
        <dbReference type="Rhea" id="RHEA-COMP:14527"/>
        <dbReference type="Rhea" id="RHEA-COMP:17342"/>
        <dbReference type="ChEBI" id="CHEBI:43474"/>
        <dbReference type="ChEBI" id="CHEBI:57930"/>
        <dbReference type="ChEBI" id="CHEBI:140395"/>
        <dbReference type="EC" id="2.7.7.8"/>
    </reaction>
</comment>
<comment type="cofactor">
    <cofactor evidence="1">
        <name>Mg(2+)</name>
        <dbReference type="ChEBI" id="CHEBI:18420"/>
    </cofactor>
</comment>
<comment type="subcellular location">
    <subcellularLocation>
        <location evidence="1">Cytoplasm</location>
    </subcellularLocation>
</comment>
<comment type="similarity">
    <text evidence="1">Belongs to the polyribonucleotide nucleotidyltransferase family.</text>
</comment>
<accession>Q0BPK3</accession>
<evidence type="ECO:0000255" key="1">
    <source>
        <dbReference type="HAMAP-Rule" id="MF_01595"/>
    </source>
</evidence>
<evidence type="ECO:0000256" key="2">
    <source>
        <dbReference type="SAM" id="MobiDB-lite"/>
    </source>
</evidence>
<organism>
    <name type="scientific">Granulibacter bethesdensis (strain ATCC BAA-1260 / CGDNIH1)</name>
    <dbReference type="NCBI Taxonomy" id="391165"/>
    <lineage>
        <taxon>Bacteria</taxon>
        <taxon>Pseudomonadati</taxon>
        <taxon>Pseudomonadota</taxon>
        <taxon>Alphaproteobacteria</taxon>
        <taxon>Acetobacterales</taxon>
        <taxon>Acetobacteraceae</taxon>
        <taxon>Granulibacter</taxon>
    </lineage>
</organism>
<protein>
    <recommendedName>
        <fullName evidence="1">Polyribonucleotide nucleotidyltransferase</fullName>
        <ecNumber evidence="1">2.7.7.8</ecNumber>
    </recommendedName>
    <alternativeName>
        <fullName evidence="1">Polynucleotide phosphorylase</fullName>
        <shortName evidence="1">PNPase</shortName>
    </alternativeName>
</protein>
<sequence>MFNYFRKELDLGGRTLVLETGKIARQADGAVLARLGDTIVLCTAVGAKSAKAGQDFFPLTVNYQEKAFAAGKIPGGFFKREGRPSEHETLVSRLIDRPIRPLFPEGFYNEVQVIATVLSHDMENDPDIVALIGCSAALTLSGIPFFGPVAASRVGLVNGAFVLNPTLEQRAESKLDLVVAGTAEGVLMVESEAEELSEDQMLAAVEFGHKGFQPVIDAIIALAEHAARDPWTLPEQNPEHVALKQRLNEAGRTLLGNAYQEKVKQLRQEKISAAKKQIIETLGIGGTPEESIAKSMLKDLEADIVRNAILDTGIRIDGRDTRTVRPIIGEVGILPRAHGSALFTRGETQALCVATLGTGQDEQVVDALTGEYRSHFMLHYNFPPYSVGEAGRMGSPGRREIGHGKLAWRAVHPVLPAKDAFPYTLRVVSEITESNGSSSMATVCGSSLALMDAGVPLKRPVAGIAMGLIKEDRAFAVLSDILGDEDHLGDMDFKVAGTEQGVTSLQMDIKITSITTEIMRIALQQARDGRMHILGEMAKAITGARGSVAATAPRITVINVPKEKIREVIGTGGKVIREIVEFSGAKIDIEDDGTIKIASTSEESTQKAIDRIQGIVAEPEVGKIYNGKVVKTADFGAFVNFLGSRDGLVHISELQQGRVNKTSDVINVGDVVKVKVLGFDDRGKVKLSMRLVDQTTGEDISDKVGPKGGRGGRGEGDLAE</sequence>
<proteinExistence type="inferred from homology"/>
<reference key="1">
    <citation type="journal article" date="2007" name="J. Bacteriol.">
        <title>Genome sequence analysis of the emerging human pathogenic acetic acid bacterium Granulibacter bethesdensis.</title>
        <authorList>
            <person name="Greenberg D.E."/>
            <person name="Porcella S.F."/>
            <person name="Zelazny A.M."/>
            <person name="Virtaneva K."/>
            <person name="Sturdevant D.E."/>
            <person name="Kupko J.J. III"/>
            <person name="Barbian K.D."/>
            <person name="Babar A."/>
            <person name="Dorward D.W."/>
            <person name="Holland S.M."/>
        </authorList>
    </citation>
    <scope>NUCLEOTIDE SEQUENCE [LARGE SCALE GENOMIC DNA]</scope>
    <source>
        <strain>ATCC BAA-1260 / CGDNIH1</strain>
    </source>
</reference>
<name>PNP_GRABC</name>
<feature type="chain" id="PRO_0000329668" description="Polyribonucleotide nucleotidyltransferase">
    <location>
        <begin position="1"/>
        <end position="720"/>
    </location>
</feature>
<feature type="domain" description="KH" evidence="1">
    <location>
        <begin position="553"/>
        <end position="612"/>
    </location>
</feature>
<feature type="domain" description="S1 motif" evidence="1">
    <location>
        <begin position="622"/>
        <end position="690"/>
    </location>
</feature>
<feature type="region of interest" description="Disordered" evidence="2">
    <location>
        <begin position="698"/>
        <end position="720"/>
    </location>
</feature>
<feature type="binding site" evidence="1">
    <location>
        <position position="486"/>
    </location>
    <ligand>
        <name>Mg(2+)</name>
        <dbReference type="ChEBI" id="CHEBI:18420"/>
    </ligand>
</feature>
<feature type="binding site" evidence="1">
    <location>
        <position position="492"/>
    </location>
    <ligand>
        <name>Mg(2+)</name>
        <dbReference type="ChEBI" id="CHEBI:18420"/>
    </ligand>
</feature>
<gene>
    <name evidence="1" type="primary">pnp</name>
    <name type="ordered locus">GbCGDNIH1_2351</name>
</gene>
<dbReference type="EC" id="2.7.7.8" evidence="1"/>
<dbReference type="EMBL" id="CP000394">
    <property type="protein sequence ID" value="ABI63249.1"/>
    <property type="molecule type" value="Genomic_DNA"/>
</dbReference>
<dbReference type="RefSeq" id="WP_011633051.1">
    <property type="nucleotide sequence ID" value="NC_008343.2"/>
</dbReference>
<dbReference type="SMR" id="Q0BPK3"/>
<dbReference type="STRING" id="391165.GbCGDNIH1_2351"/>
<dbReference type="GeneID" id="69746535"/>
<dbReference type="KEGG" id="gbe:GbCGDNIH1_2351"/>
<dbReference type="eggNOG" id="COG1185">
    <property type="taxonomic scope" value="Bacteria"/>
</dbReference>
<dbReference type="HOGENOM" id="CLU_004217_2_2_5"/>
<dbReference type="OrthoDB" id="9804305at2"/>
<dbReference type="Proteomes" id="UP000001963">
    <property type="component" value="Chromosome"/>
</dbReference>
<dbReference type="GO" id="GO:0005829">
    <property type="term" value="C:cytosol"/>
    <property type="evidence" value="ECO:0007669"/>
    <property type="project" value="TreeGrafter"/>
</dbReference>
<dbReference type="GO" id="GO:0000175">
    <property type="term" value="F:3'-5'-RNA exonuclease activity"/>
    <property type="evidence" value="ECO:0007669"/>
    <property type="project" value="TreeGrafter"/>
</dbReference>
<dbReference type="GO" id="GO:0000287">
    <property type="term" value="F:magnesium ion binding"/>
    <property type="evidence" value="ECO:0007669"/>
    <property type="project" value="UniProtKB-UniRule"/>
</dbReference>
<dbReference type="GO" id="GO:0004654">
    <property type="term" value="F:polyribonucleotide nucleotidyltransferase activity"/>
    <property type="evidence" value="ECO:0007669"/>
    <property type="project" value="UniProtKB-UniRule"/>
</dbReference>
<dbReference type="GO" id="GO:0003723">
    <property type="term" value="F:RNA binding"/>
    <property type="evidence" value="ECO:0007669"/>
    <property type="project" value="UniProtKB-UniRule"/>
</dbReference>
<dbReference type="GO" id="GO:0006402">
    <property type="term" value="P:mRNA catabolic process"/>
    <property type="evidence" value="ECO:0007669"/>
    <property type="project" value="UniProtKB-UniRule"/>
</dbReference>
<dbReference type="GO" id="GO:0006396">
    <property type="term" value="P:RNA processing"/>
    <property type="evidence" value="ECO:0007669"/>
    <property type="project" value="InterPro"/>
</dbReference>
<dbReference type="CDD" id="cd02393">
    <property type="entry name" value="KH-I_PNPase"/>
    <property type="match status" value="1"/>
</dbReference>
<dbReference type="CDD" id="cd11363">
    <property type="entry name" value="RNase_PH_PNPase_1"/>
    <property type="match status" value="1"/>
</dbReference>
<dbReference type="CDD" id="cd11364">
    <property type="entry name" value="RNase_PH_PNPase_2"/>
    <property type="match status" value="1"/>
</dbReference>
<dbReference type="CDD" id="cd04472">
    <property type="entry name" value="S1_PNPase"/>
    <property type="match status" value="1"/>
</dbReference>
<dbReference type="FunFam" id="2.40.50.140:FF:000107">
    <property type="entry name" value="Polyribonucleotide nucleotidyltransferase"/>
    <property type="match status" value="1"/>
</dbReference>
<dbReference type="FunFam" id="3.30.1370.10:FF:000001">
    <property type="entry name" value="Polyribonucleotide nucleotidyltransferase"/>
    <property type="match status" value="1"/>
</dbReference>
<dbReference type="FunFam" id="3.30.230.70:FF:000001">
    <property type="entry name" value="Polyribonucleotide nucleotidyltransferase"/>
    <property type="match status" value="1"/>
</dbReference>
<dbReference type="FunFam" id="3.30.230.70:FF:000002">
    <property type="entry name" value="Polyribonucleotide nucleotidyltransferase"/>
    <property type="match status" value="1"/>
</dbReference>
<dbReference type="Gene3D" id="3.30.230.70">
    <property type="entry name" value="GHMP Kinase, N-terminal domain"/>
    <property type="match status" value="2"/>
</dbReference>
<dbReference type="Gene3D" id="3.30.1370.10">
    <property type="entry name" value="K Homology domain, type 1"/>
    <property type="match status" value="1"/>
</dbReference>
<dbReference type="Gene3D" id="2.40.50.140">
    <property type="entry name" value="Nucleic acid-binding proteins"/>
    <property type="match status" value="1"/>
</dbReference>
<dbReference type="HAMAP" id="MF_01595">
    <property type="entry name" value="PNPase"/>
    <property type="match status" value="1"/>
</dbReference>
<dbReference type="InterPro" id="IPR001247">
    <property type="entry name" value="ExoRNase_PH_dom1"/>
</dbReference>
<dbReference type="InterPro" id="IPR015847">
    <property type="entry name" value="ExoRNase_PH_dom2"/>
</dbReference>
<dbReference type="InterPro" id="IPR036345">
    <property type="entry name" value="ExoRNase_PH_dom2_sf"/>
</dbReference>
<dbReference type="InterPro" id="IPR004087">
    <property type="entry name" value="KH_dom"/>
</dbReference>
<dbReference type="InterPro" id="IPR004088">
    <property type="entry name" value="KH_dom_type_1"/>
</dbReference>
<dbReference type="InterPro" id="IPR036612">
    <property type="entry name" value="KH_dom_type_1_sf"/>
</dbReference>
<dbReference type="InterPro" id="IPR012340">
    <property type="entry name" value="NA-bd_OB-fold"/>
</dbReference>
<dbReference type="InterPro" id="IPR012162">
    <property type="entry name" value="PNPase"/>
</dbReference>
<dbReference type="InterPro" id="IPR027408">
    <property type="entry name" value="PNPase/RNase_PH_dom_sf"/>
</dbReference>
<dbReference type="InterPro" id="IPR015848">
    <property type="entry name" value="PNPase_PH_RNA-bd_bac/org-type"/>
</dbReference>
<dbReference type="InterPro" id="IPR020568">
    <property type="entry name" value="Ribosomal_Su5_D2-typ_SF"/>
</dbReference>
<dbReference type="InterPro" id="IPR003029">
    <property type="entry name" value="S1_domain"/>
</dbReference>
<dbReference type="NCBIfam" id="TIGR03591">
    <property type="entry name" value="polynuc_phos"/>
    <property type="match status" value="1"/>
</dbReference>
<dbReference type="NCBIfam" id="NF008805">
    <property type="entry name" value="PRK11824.1"/>
    <property type="match status" value="1"/>
</dbReference>
<dbReference type="PANTHER" id="PTHR11252">
    <property type="entry name" value="POLYRIBONUCLEOTIDE NUCLEOTIDYLTRANSFERASE"/>
    <property type="match status" value="1"/>
</dbReference>
<dbReference type="PANTHER" id="PTHR11252:SF0">
    <property type="entry name" value="POLYRIBONUCLEOTIDE NUCLEOTIDYLTRANSFERASE 1, MITOCHONDRIAL"/>
    <property type="match status" value="1"/>
</dbReference>
<dbReference type="Pfam" id="PF00013">
    <property type="entry name" value="KH_1"/>
    <property type="match status" value="1"/>
</dbReference>
<dbReference type="Pfam" id="PF03726">
    <property type="entry name" value="PNPase"/>
    <property type="match status" value="1"/>
</dbReference>
<dbReference type="Pfam" id="PF01138">
    <property type="entry name" value="RNase_PH"/>
    <property type="match status" value="2"/>
</dbReference>
<dbReference type="Pfam" id="PF03725">
    <property type="entry name" value="RNase_PH_C"/>
    <property type="match status" value="2"/>
</dbReference>
<dbReference type="Pfam" id="PF00575">
    <property type="entry name" value="S1"/>
    <property type="match status" value="1"/>
</dbReference>
<dbReference type="PIRSF" id="PIRSF005499">
    <property type="entry name" value="PNPase"/>
    <property type="match status" value="1"/>
</dbReference>
<dbReference type="SMART" id="SM00322">
    <property type="entry name" value="KH"/>
    <property type="match status" value="1"/>
</dbReference>
<dbReference type="SMART" id="SM00316">
    <property type="entry name" value="S1"/>
    <property type="match status" value="1"/>
</dbReference>
<dbReference type="SUPFAM" id="SSF54791">
    <property type="entry name" value="Eukaryotic type KH-domain (KH-domain type I)"/>
    <property type="match status" value="1"/>
</dbReference>
<dbReference type="SUPFAM" id="SSF50249">
    <property type="entry name" value="Nucleic acid-binding proteins"/>
    <property type="match status" value="1"/>
</dbReference>
<dbReference type="SUPFAM" id="SSF55666">
    <property type="entry name" value="Ribonuclease PH domain 2-like"/>
    <property type="match status" value="2"/>
</dbReference>
<dbReference type="SUPFAM" id="SSF54211">
    <property type="entry name" value="Ribosomal protein S5 domain 2-like"/>
    <property type="match status" value="2"/>
</dbReference>
<dbReference type="PROSITE" id="PS50084">
    <property type="entry name" value="KH_TYPE_1"/>
    <property type="match status" value="1"/>
</dbReference>
<dbReference type="PROSITE" id="PS50126">
    <property type="entry name" value="S1"/>
    <property type="match status" value="1"/>
</dbReference>